<evidence type="ECO:0000255" key="1">
    <source>
        <dbReference type="HAMAP-Rule" id="MF_01315"/>
    </source>
</evidence>
<evidence type="ECO:0000256" key="2">
    <source>
        <dbReference type="SAM" id="MobiDB-lite"/>
    </source>
</evidence>
<evidence type="ECO:0000305" key="3"/>
<protein>
    <recommendedName>
        <fullName evidence="1">Small ribosomal subunit protein uS13</fullName>
    </recommendedName>
    <alternativeName>
        <fullName evidence="3">30S ribosomal protein S13</fullName>
    </alternativeName>
</protein>
<keyword id="KW-1185">Reference proteome</keyword>
<keyword id="KW-0687">Ribonucleoprotein</keyword>
<keyword id="KW-0689">Ribosomal protein</keyword>
<keyword id="KW-0694">RNA-binding</keyword>
<keyword id="KW-0699">rRNA-binding</keyword>
<keyword id="KW-0820">tRNA-binding</keyword>
<gene>
    <name evidence="1" type="primary">rpsM</name>
    <name type="ordered locus">Nmul_A0789</name>
</gene>
<name>RS13_NITMU</name>
<proteinExistence type="inferred from homology"/>
<organism>
    <name type="scientific">Nitrosospira multiformis (strain ATCC 25196 / NCIMB 11849 / C 71)</name>
    <dbReference type="NCBI Taxonomy" id="323848"/>
    <lineage>
        <taxon>Bacteria</taxon>
        <taxon>Pseudomonadati</taxon>
        <taxon>Pseudomonadota</taxon>
        <taxon>Betaproteobacteria</taxon>
        <taxon>Nitrosomonadales</taxon>
        <taxon>Nitrosomonadaceae</taxon>
        <taxon>Nitrosospira</taxon>
    </lineage>
</organism>
<sequence>MARIAGVNIPNHQHAEIALTAIYGIGRARAREICEAAGINVSTKMKDVTDAEMDKLRDNVAKFVVEGDLRREVSMNIKRLMDLGCYRGLRHRRGLPVRGQRTRTNARTRKGPRKAVRASSAKAGR</sequence>
<dbReference type="EMBL" id="CP000103">
    <property type="protein sequence ID" value="ABB74096.1"/>
    <property type="molecule type" value="Genomic_DNA"/>
</dbReference>
<dbReference type="RefSeq" id="WP_011380145.1">
    <property type="nucleotide sequence ID" value="NC_007614.1"/>
</dbReference>
<dbReference type="SMR" id="Q2YAX5"/>
<dbReference type="STRING" id="323848.Nmul_A0789"/>
<dbReference type="KEGG" id="nmu:Nmul_A0789"/>
<dbReference type="eggNOG" id="COG0099">
    <property type="taxonomic scope" value="Bacteria"/>
</dbReference>
<dbReference type="HOGENOM" id="CLU_103849_1_2_4"/>
<dbReference type="OrthoDB" id="9803610at2"/>
<dbReference type="Proteomes" id="UP000002718">
    <property type="component" value="Chromosome"/>
</dbReference>
<dbReference type="GO" id="GO:0005829">
    <property type="term" value="C:cytosol"/>
    <property type="evidence" value="ECO:0007669"/>
    <property type="project" value="TreeGrafter"/>
</dbReference>
<dbReference type="GO" id="GO:0015935">
    <property type="term" value="C:small ribosomal subunit"/>
    <property type="evidence" value="ECO:0007669"/>
    <property type="project" value="TreeGrafter"/>
</dbReference>
<dbReference type="GO" id="GO:0019843">
    <property type="term" value="F:rRNA binding"/>
    <property type="evidence" value="ECO:0007669"/>
    <property type="project" value="UniProtKB-UniRule"/>
</dbReference>
<dbReference type="GO" id="GO:0003735">
    <property type="term" value="F:structural constituent of ribosome"/>
    <property type="evidence" value="ECO:0007669"/>
    <property type="project" value="InterPro"/>
</dbReference>
<dbReference type="GO" id="GO:0000049">
    <property type="term" value="F:tRNA binding"/>
    <property type="evidence" value="ECO:0007669"/>
    <property type="project" value="UniProtKB-UniRule"/>
</dbReference>
<dbReference type="GO" id="GO:0006412">
    <property type="term" value="P:translation"/>
    <property type="evidence" value="ECO:0007669"/>
    <property type="project" value="UniProtKB-UniRule"/>
</dbReference>
<dbReference type="FunFam" id="1.10.8.50:FF:000001">
    <property type="entry name" value="30S ribosomal protein S13"/>
    <property type="match status" value="1"/>
</dbReference>
<dbReference type="FunFam" id="4.10.910.10:FF:000001">
    <property type="entry name" value="30S ribosomal protein S13"/>
    <property type="match status" value="1"/>
</dbReference>
<dbReference type="Gene3D" id="1.10.8.50">
    <property type="match status" value="1"/>
</dbReference>
<dbReference type="Gene3D" id="4.10.910.10">
    <property type="entry name" value="30s ribosomal protein s13, domain 2"/>
    <property type="match status" value="1"/>
</dbReference>
<dbReference type="HAMAP" id="MF_01315">
    <property type="entry name" value="Ribosomal_uS13"/>
    <property type="match status" value="1"/>
</dbReference>
<dbReference type="InterPro" id="IPR027437">
    <property type="entry name" value="Rbsml_uS13_C"/>
</dbReference>
<dbReference type="InterPro" id="IPR001892">
    <property type="entry name" value="Ribosomal_uS13"/>
</dbReference>
<dbReference type="InterPro" id="IPR010979">
    <property type="entry name" value="Ribosomal_uS13-like_H2TH"/>
</dbReference>
<dbReference type="InterPro" id="IPR019980">
    <property type="entry name" value="Ribosomal_uS13_bac-type"/>
</dbReference>
<dbReference type="InterPro" id="IPR018269">
    <property type="entry name" value="Ribosomal_uS13_CS"/>
</dbReference>
<dbReference type="NCBIfam" id="TIGR03631">
    <property type="entry name" value="uS13_bact"/>
    <property type="match status" value="1"/>
</dbReference>
<dbReference type="PANTHER" id="PTHR10871">
    <property type="entry name" value="30S RIBOSOMAL PROTEIN S13/40S RIBOSOMAL PROTEIN S18"/>
    <property type="match status" value="1"/>
</dbReference>
<dbReference type="PANTHER" id="PTHR10871:SF1">
    <property type="entry name" value="SMALL RIBOSOMAL SUBUNIT PROTEIN US13M"/>
    <property type="match status" value="1"/>
</dbReference>
<dbReference type="Pfam" id="PF00416">
    <property type="entry name" value="Ribosomal_S13"/>
    <property type="match status" value="1"/>
</dbReference>
<dbReference type="PIRSF" id="PIRSF002134">
    <property type="entry name" value="Ribosomal_S13"/>
    <property type="match status" value="1"/>
</dbReference>
<dbReference type="SUPFAM" id="SSF46946">
    <property type="entry name" value="S13-like H2TH domain"/>
    <property type="match status" value="1"/>
</dbReference>
<dbReference type="PROSITE" id="PS00646">
    <property type="entry name" value="RIBOSOMAL_S13_1"/>
    <property type="match status" value="1"/>
</dbReference>
<dbReference type="PROSITE" id="PS50159">
    <property type="entry name" value="RIBOSOMAL_S13_2"/>
    <property type="match status" value="1"/>
</dbReference>
<reference key="1">
    <citation type="submission" date="2005-08" db="EMBL/GenBank/DDBJ databases">
        <title>Complete sequence of chromosome 1 of Nitrosospira multiformis ATCC 25196.</title>
        <authorList>
            <person name="Copeland A."/>
            <person name="Lucas S."/>
            <person name="Lapidus A."/>
            <person name="Barry K."/>
            <person name="Detter J.C."/>
            <person name="Glavina T."/>
            <person name="Hammon N."/>
            <person name="Israni S."/>
            <person name="Pitluck S."/>
            <person name="Chain P."/>
            <person name="Malfatti S."/>
            <person name="Shin M."/>
            <person name="Vergez L."/>
            <person name="Schmutz J."/>
            <person name="Larimer F."/>
            <person name="Land M."/>
            <person name="Hauser L."/>
            <person name="Kyrpides N."/>
            <person name="Lykidis A."/>
            <person name="Richardson P."/>
        </authorList>
    </citation>
    <scope>NUCLEOTIDE SEQUENCE [LARGE SCALE GENOMIC DNA]</scope>
    <source>
        <strain>ATCC 25196 / NCIMB 11849 / C 71</strain>
    </source>
</reference>
<accession>Q2YAX5</accession>
<feature type="chain" id="PRO_0000230534" description="Small ribosomal subunit protein uS13">
    <location>
        <begin position="1"/>
        <end position="125"/>
    </location>
</feature>
<feature type="region of interest" description="Disordered" evidence="2">
    <location>
        <begin position="94"/>
        <end position="125"/>
    </location>
</feature>
<feature type="compositionally biased region" description="Basic residues" evidence="2">
    <location>
        <begin position="94"/>
        <end position="116"/>
    </location>
</feature>
<comment type="function">
    <text evidence="1">Located at the top of the head of the 30S subunit, it contacts several helices of the 16S rRNA. In the 70S ribosome it contacts the 23S rRNA (bridge B1a) and protein L5 of the 50S subunit (bridge B1b), connecting the 2 subunits; these bridges are implicated in subunit movement. Contacts the tRNAs in the A and P-sites.</text>
</comment>
<comment type="subunit">
    <text evidence="1">Part of the 30S ribosomal subunit. Forms a loose heterodimer with protein S19. Forms two bridges to the 50S subunit in the 70S ribosome.</text>
</comment>
<comment type="similarity">
    <text evidence="1">Belongs to the universal ribosomal protein uS13 family.</text>
</comment>